<name>SPO12_ARATH</name>
<dbReference type="EC" id="5.6.2.2" evidence="11"/>
<dbReference type="EMBL" id="AJ251990">
    <property type="protein sequence ID" value="CAB81545.1"/>
    <property type="molecule type" value="mRNA"/>
</dbReference>
<dbReference type="EMBL" id="AC007764">
    <property type="protein sequence ID" value="AAF24569.1"/>
    <property type="status" value="ALT_SEQ"/>
    <property type="molecule type" value="Genomic_DNA"/>
</dbReference>
<dbReference type="EMBL" id="CP002684">
    <property type="protein sequence ID" value="AEE34178.1"/>
    <property type="molecule type" value="Genomic_DNA"/>
</dbReference>
<dbReference type="EMBL" id="DQ446392">
    <property type="protein sequence ID" value="ABE65738.1"/>
    <property type="molecule type" value="mRNA"/>
</dbReference>
<dbReference type="PIR" id="A96665">
    <property type="entry name" value="A96665"/>
</dbReference>
<dbReference type="PIR" id="T52651">
    <property type="entry name" value="T52651"/>
</dbReference>
<dbReference type="RefSeq" id="NP_176582.2">
    <property type="nucleotide sequence ID" value="NM_105072.3"/>
</dbReference>
<dbReference type="SMR" id="Q9M4A1"/>
<dbReference type="DIP" id="DIP-40433N"/>
<dbReference type="FunCoup" id="Q9M4A1">
    <property type="interactions" value="6"/>
</dbReference>
<dbReference type="IntAct" id="Q9M4A1">
    <property type="interactions" value="3"/>
</dbReference>
<dbReference type="STRING" id="3702.Q9M4A1"/>
<dbReference type="iPTMnet" id="Q9M4A1"/>
<dbReference type="PaxDb" id="3702-AT1G63990.1"/>
<dbReference type="EnsemblPlants" id="AT1G63990.1">
    <property type="protein sequence ID" value="AT1G63990.1"/>
    <property type="gene ID" value="AT1G63990"/>
</dbReference>
<dbReference type="GeneID" id="842702"/>
<dbReference type="Gramene" id="AT1G63990.1">
    <property type="protein sequence ID" value="AT1G63990.1"/>
    <property type="gene ID" value="AT1G63990"/>
</dbReference>
<dbReference type="KEGG" id="ath:AT1G63990"/>
<dbReference type="Araport" id="AT1G63990"/>
<dbReference type="TAIR" id="AT1G63990">
    <property type="gene designation" value="SPO11-2"/>
</dbReference>
<dbReference type="eggNOG" id="KOG2795">
    <property type="taxonomic scope" value="Eukaryota"/>
</dbReference>
<dbReference type="HOGENOM" id="CLU_037229_1_2_1"/>
<dbReference type="InParanoid" id="Q9M4A1"/>
<dbReference type="OMA" id="CNVKWIG"/>
<dbReference type="PhylomeDB" id="Q9M4A1"/>
<dbReference type="PRO" id="PR:Q9M4A1"/>
<dbReference type="Proteomes" id="UP000006548">
    <property type="component" value="Chromosome 1"/>
</dbReference>
<dbReference type="ExpressionAtlas" id="Q9M4A1">
    <property type="expression patterns" value="baseline and differential"/>
</dbReference>
<dbReference type="GO" id="GO:0005694">
    <property type="term" value="C:chromosome"/>
    <property type="evidence" value="ECO:0007669"/>
    <property type="project" value="InterPro"/>
</dbReference>
<dbReference type="GO" id="GO:0005634">
    <property type="term" value="C:nucleus"/>
    <property type="evidence" value="ECO:0007669"/>
    <property type="project" value="UniProtKB-SubCell"/>
</dbReference>
<dbReference type="GO" id="GO:0005524">
    <property type="term" value="F:ATP binding"/>
    <property type="evidence" value="ECO:0007669"/>
    <property type="project" value="InterPro"/>
</dbReference>
<dbReference type="GO" id="GO:0003677">
    <property type="term" value="F:DNA binding"/>
    <property type="evidence" value="ECO:0007669"/>
    <property type="project" value="UniProtKB-KW"/>
</dbReference>
<dbReference type="GO" id="GO:0003918">
    <property type="term" value="F:DNA topoisomerase type II (double strand cut, ATP-hydrolyzing) activity"/>
    <property type="evidence" value="ECO:0007669"/>
    <property type="project" value="UniProtKB-EC"/>
</dbReference>
<dbReference type="GO" id="GO:0046872">
    <property type="term" value="F:metal ion binding"/>
    <property type="evidence" value="ECO:0007669"/>
    <property type="project" value="UniProtKB-KW"/>
</dbReference>
<dbReference type="GO" id="GO:0051026">
    <property type="term" value="P:chiasma assembly"/>
    <property type="evidence" value="ECO:0000315"/>
    <property type="project" value="TAIR"/>
</dbReference>
<dbReference type="GO" id="GO:0007059">
    <property type="term" value="P:chromosome segregation"/>
    <property type="evidence" value="ECO:0000315"/>
    <property type="project" value="TAIR"/>
</dbReference>
<dbReference type="GO" id="GO:0009553">
    <property type="term" value="P:embryo sac development"/>
    <property type="evidence" value="ECO:0000315"/>
    <property type="project" value="TAIR"/>
</dbReference>
<dbReference type="GO" id="GO:0007129">
    <property type="term" value="P:homologous chromosome pairing at meiosis"/>
    <property type="evidence" value="ECO:0000315"/>
    <property type="project" value="TAIR"/>
</dbReference>
<dbReference type="GO" id="GO:0051321">
    <property type="term" value="P:meiotic cell cycle"/>
    <property type="evidence" value="ECO:0000315"/>
    <property type="project" value="TAIR"/>
</dbReference>
<dbReference type="GO" id="GO:0009555">
    <property type="term" value="P:pollen development"/>
    <property type="evidence" value="ECO:0000315"/>
    <property type="project" value="TAIR"/>
</dbReference>
<dbReference type="GO" id="GO:0007131">
    <property type="term" value="P:reciprocal meiotic recombination"/>
    <property type="evidence" value="ECO:0000315"/>
    <property type="project" value="TAIR"/>
</dbReference>
<dbReference type="GO" id="GO:0048316">
    <property type="term" value="P:seed development"/>
    <property type="evidence" value="ECO:0000315"/>
    <property type="project" value="TAIR"/>
</dbReference>
<dbReference type="CDD" id="cd00223">
    <property type="entry name" value="TOPRIM_TopoIIB_SPO"/>
    <property type="match status" value="1"/>
</dbReference>
<dbReference type="FunFam" id="1.10.10.10:FF:000487">
    <property type="entry name" value="Meiotic recombination protein SPO11-2"/>
    <property type="match status" value="1"/>
</dbReference>
<dbReference type="FunFam" id="3.40.1360.10:FF:000009">
    <property type="entry name" value="Meiotic recombination protein SPO11-2"/>
    <property type="match status" value="1"/>
</dbReference>
<dbReference type="Gene3D" id="3.40.1360.10">
    <property type="match status" value="1"/>
</dbReference>
<dbReference type="Gene3D" id="1.10.10.10">
    <property type="entry name" value="Winged helix-like DNA-binding domain superfamily/Winged helix DNA-binding domain"/>
    <property type="match status" value="1"/>
</dbReference>
<dbReference type="InterPro" id="IPR002815">
    <property type="entry name" value="Spo11/TopoVI_A"/>
</dbReference>
<dbReference type="InterPro" id="IPR013049">
    <property type="entry name" value="Spo11/TopoVI_A_N"/>
</dbReference>
<dbReference type="InterPro" id="IPR036078">
    <property type="entry name" value="Spo11/TopoVI_A_sf"/>
</dbReference>
<dbReference type="InterPro" id="IPR034136">
    <property type="entry name" value="TOPRIM_Topo6A/Spo11"/>
</dbReference>
<dbReference type="InterPro" id="IPR036388">
    <property type="entry name" value="WH-like_DNA-bd_sf"/>
</dbReference>
<dbReference type="PANTHER" id="PTHR10848">
    <property type="entry name" value="MEIOTIC RECOMBINATION PROTEIN SPO11"/>
    <property type="match status" value="1"/>
</dbReference>
<dbReference type="PANTHER" id="PTHR10848:SF0">
    <property type="entry name" value="MEIOTIC RECOMBINATION PROTEIN SPO11"/>
    <property type="match status" value="1"/>
</dbReference>
<dbReference type="Pfam" id="PF21180">
    <property type="entry name" value="TOP6A-Spo11_Toprim"/>
    <property type="match status" value="1"/>
</dbReference>
<dbReference type="Pfam" id="PF04406">
    <property type="entry name" value="TP6A_N"/>
    <property type="match status" value="1"/>
</dbReference>
<dbReference type="PRINTS" id="PR01550">
    <property type="entry name" value="TOP6AFAMILY"/>
</dbReference>
<dbReference type="SUPFAM" id="SSF56726">
    <property type="entry name" value="DNA topoisomerase IV, alpha subunit"/>
    <property type="match status" value="1"/>
</dbReference>
<dbReference type="PROSITE" id="PS52041">
    <property type="entry name" value="TOPO_IIB"/>
    <property type="match status" value="1"/>
</dbReference>
<protein>
    <recommendedName>
        <fullName>Meiotic recombination protein SPO11-2</fullName>
        <shortName>AtSPO11-2</shortName>
        <ecNumber evidence="11">5.6.2.2</ecNumber>
    </recommendedName>
</protein>
<keyword id="KW-0238">DNA-binding</keyword>
<keyword id="KW-0413">Isomerase</keyword>
<keyword id="KW-0460">Magnesium</keyword>
<keyword id="KW-0469">Meiosis</keyword>
<keyword id="KW-0479">Metal-binding</keyword>
<keyword id="KW-0539">Nucleus</keyword>
<keyword id="KW-1185">Reference proteome</keyword>
<keyword id="KW-0799">Topoisomerase</keyword>
<proteinExistence type="evidence at protein level"/>
<organism>
    <name type="scientific">Arabidopsis thaliana</name>
    <name type="common">Mouse-ear cress</name>
    <dbReference type="NCBI Taxonomy" id="3702"/>
    <lineage>
        <taxon>Eukaryota</taxon>
        <taxon>Viridiplantae</taxon>
        <taxon>Streptophyta</taxon>
        <taxon>Embryophyta</taxon>
        <taxon>Tracheophyta</taxon>
        <taxon>Spermatophyta</taxon>
        <taxon>Magnoliopsida</taxon>
        <taxon>eudicotyledons</taxon>
        <taxon>Gunneridae</taxon>
        <taxon>Pentapetalae</taxon>
        <taxon>rosids</taxon>
        <taxon>malvids</taxon>
        <taxon>Brassicales</taxon>
        <taxon>Brassicaceae</taxon>
        <taxon>Camelineae</taxon>
        <taxon>Arabidopsis</taxon>
    </lineage>
</organism>
<gene>
    <name type="primary">SPO11-2</name>
    <name type="ordered locus">At1g63990</name>
    <name type="ORF">F22C12.24</name>
</gene>
<reference key="1">
    <citation type="journal article" date="2000" name="Nucleic Acids Res.">
        <title>Molecular characterisation of two paralogous SPO11 homologues in Arabidopsis thaliana.</title>
        <authorList>
            <person name="Hartung F."/>
            <person name="Puchta H."/>
        </authorList>
    </citation>
    <scope>NUCLEOTIDE SEQUENCE [MRNA]</scope>
    <scope>TISSUE SPECIFICITY</scope>
    <source>
        <strain>cv. Columbia</strain>
        <tissue>Flower</tissue>
    </source>
</reference>
<reference key="2">
    <citation type="journal article" date="2000" name="Nature">
        <title>Sequence and analysis of chromosome 1 of the plant Arabidopsis thaliana.</title>
        <authorList>
            <person name="Theologis A."/>
            <person name="Ecker J.R."/>
            <person name="Palm C.J."/>
            <person name="Federspiel N.A."/>
            <person name="Kaul S."/>
            <person name="White O."/>
            <person name="Alonso J."/>
            <person name="Altafi H."/>
            <person name="Araujo R."/>
            <person name="Bowman C.L."/>
            <person name="Brooks S.Y."/>
            <person name="Buehler E."/>
            <person name="Chan A."/>
            <person name="Chao Q."/>
            <person name="Chen H."/>
            <person name="Cheuk R.F."/>
            <person name="Chin C.W."/>
            <person name="Chung M.K."/>
            <person name="Conn L."/>
            <person name="Conway A.B."/>
            <person name="Conway A.R."/>
            <person name="Creasy T.H."/>
            <person name="Dewar K."/>
            <person name="Dunn P."/>
            <person name="Etgu P."/>
            <person name="Feldblyum T.V."/>
            <person name="Feng J.-D."/>
            <person name="Fong B."/>
            <person name="Fujii C.Y."/>
            <person name="Gill J.E."/>
            <person name="Goldsmith A.D."/>
            <person name="Haas B."/>
            <person name="Hansen N.F."/>
            <person name="Hughes B."/>
            <person name="Huizar L."/>
            <person name="Hunter J.L."/>
            <person name="Jenkins J."/>
            <person name="Johnson-Hopson C."/>
            <person name="Khan S."/>
            <person name="Khaykin E."/>
            <person name="Kim C.J."/>
            <person name="Koo H.L."/>
            <person name="Kremenetskaia I."/>
            <person name="Kurtz D.B."/>
            <person name="Kwan A."/>
            <person name="Lam B."/>
            <person name="Langin-Hooper S."/>
            <person name="Lee A."/>
            <person name="Lee J.M."/>
            <person name="Lenz C.A."/>
            <person name="Li J.H."/>
            <person name="Li Y.-P."/>
            <person name="Lin X."/>
            <person name="Liu S.X."/>
            <person name="Liu Z.A."/>
            <person name="Luros J.S."/>
            <person name="Maiti R."/>
            <person name="Marziali A."/>
            <person name="Militscher J."/>
            <person name="Miranda M."/>
            <person name="Nguyen M."/>
            <person name="Nierman W.C."/>
            <person name="Osborne B.I."/>
            <person name="Pai G."/>
            <person name="Peterson J."/>
            <person name="Pham P.K."/>
            <person name="Rizzo M."/>
            <person name="Rooney T."/>
            <person name="Rowley D."/>
            <person name="Sakano H."/>
            <person name="Salzberg S.L."/>
            <person name="Schwartz J.R."/>
            <person name="Shinn P."/>
            <person name="Southwick A.M."/>
            <person name="Sun H."/>
            <person name="Tallon L.J."/>
            <person name="Tambunga G."/>
            <person name="Toriumi M.J."/>
            <person name="Town C.D."/>
            <person name="Utterback T."/>
            <person name="Van Aken S."/>
            <person name="Vaysberg M."/>
            <person name="Vysotskaia V.S."/>
            <person name="Walker M."/>
            <person name="Wu D."/>
            <person name="Yu G."/>
            <person name="Fraser C.M."/>
            <person name="Venter J.C."/>
            <person name="Davis R.W."/>
        </authorList>
    </citation>
    <scope>NUCLEOTIDE SEQUENCE [LARGE SCALE GENOMIC DNA]</scope>
    <source>
        <strain>cv. Columbia</strain>
    </source>
</reference>
<reference key="3">
    <citation type="journal article" date="2017" name="Plant J.">
        <title>Araport11: a complete reannotation of the Arabidopsis thaliana reference genome.</title>
        <authorList>
            <person name="Cheng C.Y."/>
            <person name="Krishnakumar V."/>
            <person name="Chan A.P."/>
            <person name="Thibaud-Nissen F."/>
            <person name="Schobel S."/>
            <person name="Town C.D."/>
        </authorList>
    </citation>
    <scope>GENOME REANNOTATION</scope>
    <source>
        <strain>cv. Columbia</strain>
    </source>
</reference>
<reference key="4">
    <citation type="journal article" date="2006" name="Plant Biotechnol. J.">
        <title>Simultaneous high-throughput recombinational cloning of open reading frames in closed and open configurations.</title>
        <authorList>
            <person name="Underwood B.A."/>
            <person name="Vanderhaeghen R."/>
            <person name="Whitford R."/>
            <person name="Town C.D."/>
            <person name="Hilson P."/>
        </authorList>
    </citation>
    <scope>NUCLEOTIDE SEQUENCE [LARGE SCALE MRNA]</scope>
    <source>
        <strain>cv. Columbia</strain>
    </source>
</reference>
<reference key="5">
    <citation type="journal article" date="2001" name="Gene">
        <title>Molecular characterization of homologues of both subunits A (SPO11) and B of the archaebacterial topoisomerase 6 in plants.</title>
        <authorList>
            <person name="Hartung F."/>
            <person name="Puchta H."/>
        </authorList>
    </citation>
    <scope>LACK OF INTERACTION WITH TOP6B</scope>
    <source>
        <strain>cv. Columbia</strain>
        <tissue>Flower</tissue>
    </source>
</reference>
<reference key="6">
    <citation type="journal article" date="2006" name="Plant J.">
        <title>Arabidopsis SPO11-2 functions with SPO11-1 in meiotic recombination.</title>
        <authorList>
            <person name="Stacey N.J."/>
            <person name="Kuromori T."/>
            <person name="Azumi Y."/>
            <person name="Roberts G."/>
            <person name="Breuer C."/>
            <person name="Wada T."/>
            <person name="Maxwell A."/>
            <person name="Roberts K."/>
            <person name="Sugimoto-Shirasu K."/>
        </authorList>
    </citation>
    <scope>FUNCTION</scope>
    <scope>DISRUPTION PHENOTYPE</scope>
    <scope>SUBCELLULAR LOCATION</scope>
</reference>
<reference key="7">
    <citation type="journal article" date="2007" name="EMBO J.">
        <title>AtPRD1 is required for meiotic double strand break formation in Arabidopsis thaliana.</title>
        <authorList>
            <person name="De Muyt A."/>
            <person name="Vezon D."/>
            <person name="Gendrot G."/>
            <person name="Gallois J.-L."/>
            <person name="Stevens R."/>
            <person name="Grelon M."/>
        </authorList>
    </citation>
    <scope>INTERACTION WITH PRD1</scope>
</reference>
<reference key="8">
    <citation type="journal article" date="2007" name="Plant Cell">
        <title>The catalytically active tyrosine residues of both SPO11-1 and SPO11-2 are required for meiotic double-strand break induction in Arabidopsis.</title>
        <authorList>
            <person name="Hartung F."/>
            <person name="Wurz-Wildersinn R."/>
            <person name="Fuchs J."/>
            <person name="Schubert I."/>
            <person name="Suer S."/>
            <person name="Puchta H."/>
        </authorList>
    </citation>
    <scope>FUNCTION</scope>
    <scope>SUBCELLULAR LOCATION</scope>
    <scope>DISRUPTION PHENOTYPE</scope>
    <scope>ACTIVE SITE</scope>
    <scope>MUTAGENESIS OF TYR-124</scope>
</reference>
<reference key="9">
    <citation type="journal article" date="2009" name="PLoS Genet.">
        <title>A high throughput genetic screen identifies new early meiotic recombination functions in Arabidopsis thaliana.</title>
        <authorList>
            <person name="De Muyt A."/>
            <person name="Pereira L."/>
            <person name="Vezon D."/>
            <person name="Chelysheva L."/>
            <person name="Gendrot G."/>
            <person name="Chambon A."/>
            <person name="Laine-Choinard S."/>
            <person name="Pelletier G."/>
            <person name="Mercier R."/>
            <person name="Nogue F."/>
            <person name="Grelon M."/>
        </authorList>
    </citation>
    <scope>FUNCTION</scope>
    <scope>DISRUPTION PHENOTYPE</scope>
</reference>
<reference key="10">
    <citation type="journal article" date="2016" name="Science">
        <title>A DNA topoisomerase VI-like complex initiates meiotic recombination.</title>
        <authorList>
            <person name="Vrielynck N."/>
            <person name="Chambon A."/>
            <person name="Vezon D."/>
            <person name="Pereira L."/>
            <person name="Chelysheva L."/>
            <person name="De Muyt A."/>
            <person name="Mezard C."/>
            <person name="Mayer C."/>
            <person name="Grelon M."/>
        </authorList>
    </citation>
    <scope>FUNCTION</scope>
    <scope>INTERACTION WITH MTOPVIB</scope>
</reference>
<reference key="11">
    <citation type="journal article" date="2017" name="Sci. Rep.">
        <title>MTOPVIB interacts with AtPRD1 and plays important roles in formation of meiotic DNA double-strand breaks in Arabidopsis.</title>
        <authorList>
            <person name="Tang Y."/>
            <person name="Yin Z."/>
            <person name="Zeng Y."/>
            <person name="Zhang Q."/>
            <person name="Chen L."/>
            <person name="He Y."/>
            <person name="Lu P."/>
            <person name="Ye D."/>
            <person name="Zhang X."/>
        </authorList>
    </citation>
    <scope>INTERACTION WITH MTOPVIB AND PRD1</scope>
    <source>
        <strain>cv. Columbia</strain>
        <strain>cv. Landsberg erecta</strain>
    </source>
</reference>
<accession>Q9M4A1</accession>
<accession>Q9SH50</accession>
<feature type="chain" id="PRO_0000346111" description="Meiotic recombination protein SPO11-2">
    <location>
        <begin position="1"/>
        <end position="383"/>
    </location>
</feature>
<feature type="domain" description="Topo IIA-type catalytic" evidence="2">
    <location>
        <begin position="24"/>
        <end position="167"/>
    </location>
</feature>
<feature type="active site" description="O-(5'-phospho-DNA)-tyrosine intermediate" evidence="2 7">
    <location>
        <position position="124"/>
    </location>
</feature>
<feature type="binding site" evidence="1">
    <location>
        <position position="217"/>
    </location>
    <ligand>
        <name>Mg(2+)</name>
        <dbReference type="ChEBI" id="CHEBI:18420"/>
    </ligand>
</feature>
<feature type="binding site" evidence="1">
    <location>
        <position position="270"/>
    </location>
    <ligand>
        <name>Mg(2+)</name>
        <dbReference type="ChEBI" id="CHEBI:18420"/>
    </ligand>
</feature>
<feature type="mutagenesis site" description="Loss of double-strand breaks induction." evidence="7">
    <original>Y</original>
    <variation>F</variation>
    <location>
        <position position="124"/>
    </location>
</feature>
<comment type="function">
    <text evidence="5 7 8 9">Component of a topoisomerase 6 complex specifically required for meiotic recombination (PubMed:17018031, PubMed:17965269, PubMed:26917763). Together with MTOPVIB, mediates DNA cleavage that forms the double-strand breaks (DSB) that initiate meiotic recombination (PubMed:19763177, PubMed:26917763). The complex promotes relaxation of negative and positive supercoiled DNA and DNA decatenation through cleavage and ligation cycles (PubMed:17018031, PubMed:17965269, PubMed:26917763).</text>
</comment>
<comment type="catalytic activity">
    <reaction evidence="2 11">
        <text>ATP-dependent breakage, passage and rejoining of double-stranded DNA.</text>
        <dbReference type="EC" id="5.6.2.2"/>
    </reaction>
</comment>
<comment type="cofactor">
    <cofactor evidence="1">
        <name>Mg(2+)</name>
        <dbReference type="ChEBI" id="CHEBI:18420"/>
    </cofactor>
</comment>
<comment type="subunit">
    <text evidence="4 6 9 10">Heterotetramer of 2 SPO11 (SPO11-1 and/or SPO11-2) and 2 MTOPVIB chains (Probable). Interacts with MTOPVIB (PubMed:26917763, PubMed:28855712). May form a heterodimer with SPO11-1. Interacts with PRD1 (PubMed:17762870, PubMed:28855712). Does not interact with TOP6B (PubMed:11410368).</text>
</comment>
<comment type="interaction">
    <interactant intactId="EBI-1772309">
        <id>Q9M4A1</id>
    </interactant>
    <interactant intactId="EBI-16200362">
        <id>Q5Q0E6</id>
        <label>MTOPVIB</label>
    </interactant>
    <organismsDiffer>false</organismsDiffer>
    <experiments>7</experiments>
</comment>
<comment type="interaction">
    <interactant intactId="EBI-1772309">
        <id>Q9M4A1</id>
    </interactant>
    <interactant intactId="EBI-1540725">
        <id>Q9M4A2</id>
        <label>SPO11-1</label>
    </interactant>
    <organismsDiffer>false</organismsDiffer>
    <experiments>7</experiments>
</comment>
<comment type="subcellular location">
    <subcellularLocation>
        <location evidence="5 7">Nucleus</location>
    </subcellularLocation>
</comment>
<comment type="tissue specificity">
    <text evidence="3">Very low expression in flowers and shoots.</text>
</comment>
<comment type="disruption phenotype">
    <text evidence="5 7 8">Plants show a semi-sterile phenotype and a drastic decrease of meiotic recombination, indicating that SPO11-1 and SPO11-3 are not functionally redundant. SPO11-1 and SPO11-2 are both required for double-strand breaks induction. Drastic decrease in chiasma formation at metaphase I associated with an absence of synapsis in prophase, due to the inability to make double-strand breaks (DSB) (PubMed:19763177).</text>
</comment>
<comment type="similarity">
    <text evidence="11">Belongs to the TOP6A family.</text>
</comment>
<comment type="sequence caution" evidence="11">
    <conflict type="erroneous gene model prediction">
        <sequence resource="EMBL-CDS" id="AAF24569"/>
    </conflict>
</comment>
<sequence>MEESSGLSSMKFFSDQHLSYADILLPHEARARIEVSVLNLLRILNSPDPAISDLSLINRKRSNSCINKGILTDVSYIFLSTSFTKSSLTNAKTAKAFVRVWKVMEICFQILLQEKRVTQRELFYKLLCDSPDYFSSQIEVNRSVQDVVALLRCSRYSLGIMASSRGLVAGRLFLQEPGKEAVDCSACGSSGFAITGDLNLLDNTIMRTDARYIIIVEKHAIFHRLVEDRVFNHIPCVFITAKGYPDIATRFFLHRMSTTFPDLPILVLVDWNPAGLAILCTFKFGSIGMGLEAYRYACNVKWIGLRGDDLNLIPEESLVPLKPKDSQIAKSLLSSKILQENYIEELSLMVQTGKRAEIEALYCHGYNYLGKYIATKIVQGKYI</sequence>
<evidence type="ECO:0000250" key="1">
    <source>
        <dbReference type="UniProtKB" id="Q57815"/>
    </source>
</evidence>
<evidence type="ECO:0000255" key="2">
    <source>
        <dbReference type="PROSITE-ProRule" id="PRU01385"/>
    </source>
</evidence>
<evidence type="ECO:0000269" key="3">
    <source>
    </source>
</evidence>
<evidence type="ECO:0000269" key="4">
    <source>
    </source>
</evidence>
<evidence type="ECO:0000269" key="5">
    <source>
    </source>
</evidence>
<evidence type="ECO:0000269" key="6">
    <source>
    </source>
</evidence>
<evidence type="ECO:0000269" key="7">
    <source>
    </source>
</evidence>
<evidence type="ECO:0000269" key="8">
    <source>
    </source>
</evidence>
<evidence type="ECO:0000269" key="9">
    <source>
    </source>
</evidence>
<evidence type="ECO:0000269" key="10">
    <source>
    </source>
</evidence>
<evidence type="ECO:0000305" key="11"/>